<comment type="function">
    <text evidence="1">Catalyzes two activities which are involved in the cyclic version of arginine biosynthesis: the synthesis of acetylglutamate from glutamate and acetyl-CoA, and of ornithine by transacetylation between acetylornithine and glutamate.</text>
</comment>
<comment type="catalytic activity">
    <reaction evidence="1">
        <text>N(2)-acetyl-L-ornithine + L-glutamate = N-acetyl-L-glutamate + L-ornithine</text>
        <dbReference type="Rhea" id="RHEA:15349"/>
        <dbReference type="ChEBI" id="CHEBI:29985"/>
        <dbReference type="ChEBI" id="CHEBI:44337"/>
        <dbReference type="ChEBI" id="CHEBI:46911"/>
        <dbReference type="ChEBI" id="CHEBI:57805"/>
        <dbReference type="EC" id="2.3.1.35"/>
    </reaction>
</comment>
<comment type="catalytic activity">
    <reaction evidence="1">
        <text>L-glutamate + acetyl-CoA = N-acetyl-L-glutamate + CoA + H(+)</text>
        <dbReference type="Rhea" id="RHEA:24292"/>
        <dbReference type="ChEBI" id="CHEBI:15378"/>
        <dbReference type="ChEBI" id="CHEBI:29985"/>
        <dbReference type="ChEBI" id="CHEBI:44337"/>
        <dbReference type="ChEBI" id="CHEBI:57287"/>
        <dbReference type="ChEBI" id="CHEBI:57288"/>
        <dbReference type="EC" id="2.3.1.1"/>
    </reaction>
</comment>
<comment type="pathway">
    <text evidence="1">Amino-acid biosynthesis; L-arginine biosynthesis; L-ornithine and N-acetyl-L-glutamate from L-glutamate and N(2)-acetyl-L-ornithine (cyclic): step 1/1.</text>
</comment>
<comment type="pathway">
    <text evidence="1">Amino-acid biosynthesis; L-arginine biosynthesis; N(2)-acetyl-L-ornithine from L-glutamate: step 1/4.</text>
</comment>
<comment type="subunit">
    <text evidence="1">Heterodimer of an alpha and a beta chain.</text>
</comment>
<comment type="subcellular location">
    <subcellularLocation>
        <location evidence="1">Mitochondrion matrix</location>
    </subcellularLocation>
</comment>
<comment type="PTM">
    <text evidence="1">The alpha and beta chains are autoproteolytically processed from a single precursor protein within the mitochondrion.</text>
</comment>
<comment type="similarity">
    <text evidence="1">Belongs to the ArgJ family.</text>
</comment>
<protein>
    <recommendedName>
        <fullName evidence="1">Arginine biosynthesis bifunctional protein ArgJ, mitochondrial</fullName>
    </recommendedName>
    <domain>
        <recommendedName>
            <fullName evidence="1">Glutamate N-acetyltransferase</fullName>
            <shortName evidence="1">GAT</shortName>
            <ecNumber evidence="1">2.3.1.35</ecNumber>
        </recommendedName>
        <alternativeName>
            <fullName evidence="1">Ornithine acetyltransferase</fullName>
            <shortName evidence="1">OATase</shortName>
        </alternativeName>
        <alternativeName>
            <fullName evidence="1">Ornithine transacetylase</fullName>
        </alternativeName>
    </domain>
    <domain>
        <recommendedName>
            <fullName evidence="1">Amino-acid acetyltransferase</fullName>
            <ecNumber evidence="1">2.3.1.1</ecNumber>
        </recommendedName>
        <alternativeName>
            <fullName evidence="1">N-acetylglutamate synthase</fullName>
            <shortName evidence="1">AGS</shortName>
        </alternativeName>
    </domain>
    <component>
        <recommendedName>
            <fullName evidence="1">Arginine biosynthesis bifunctional protein ArgJ alpha chain</fullName>
        </recommendedName>
    </component>
    <component>
        <recommendedName>
            <fullName evidence="1">Arginine biosynthesis bifunctional protein ArgJ beta chain</fullName>
        </recommendedName>
    </component>
</protein>
<reference key="1">
    <citation type="journal article" date="2005" name="Nature">
        <title>The genome of the social amoeba Dictyostelium discoideum.</title>
        <authorList>
            <person name="Eichinger L."/>
            <person name="Pachebat J.A."/>
            <person name="Gloeckner G."/>
            <person name="Rajandream M.A."/>
            <person name="Sucgang R."/>
            <person name="Berriman M."/>
            <person name="Song J."/>
            <person name="Olsen R."/>
            <person name="Szafranski K."/>
            <person name="Xu Q."/>
            <person name="Tunggal B."/>
            <person name="Kummerfeld S."/>
            <person name="Madera M."/>
            <person name="Konfortov B.A."/>
            <person name="Rivero F."/>
            <person name="Bankier A.T."/>
            <person name="Lehmann R."/>
            <person name="Hamlin N."/>
            <person name="Davies R."/>
            <person name="Gaudet P."/>
            <person name="Fey P."/>
            <person name="Pilcher K."/>
            <person name="Chen G."/>
            <person name="Saunders D."/>
            <person name="Sodergren E.J."/>
            <person name="Davis P."/>
            <person name="Kerhornou A."/>
            <person name="Nie X."/>
            <person name="Hall N."/>
            <person name="Anjard C."/>
            <person name="Hemphill L."/>
            <person name="Bason N."/>
            <person name="Farbrother P."/>
            <person name="Desany B."/>
            <person name="Just E."/>
            <person name="Morio T."/>
            <person name="Rost R."/>
            <person name="Churcher C.M."/>
            <person name="Cooper J."/>
            <person name="Haydock S."/>
            <person name="van Driessche N."/>
            <person name="Cronin A."/>
            <person name="Goodhead I."/>
            <person name="Muzny D.M."/>
            <person name="Mourier T."/>
            <person name="Pain A."/>
            <person name="Lu M."/>
            <person name="Harper D."/>
            <person name="Lindsay R."/>
            <person name="Hauser H."/>
            <person name="James K.D."/>
            <person name="Quiles M."/>
            <person name="Madan Babu M."/>
            <person name="Saito T."/>
            <person name="Buchrieser C."/>
            <person name="Wardroper A."/>
            <person name="Felder M."/>
            <person name="Thangavelu M."/>
            <person name="Johnson D."/>
            <person name="Knights A."/>
            <person name="Loulseged H."/>
            <person name="Mungall K.L."/>
            <person name="Oliver K."/>
            <person name="Price C."/>
            <person name="Quail M.A."/>
            <person name="Urushihara H."/>
            <person name="Hernandez J."/>
            <person name="Rabbinowitsch E."/>
            <person name="Steffen D."/>
            <person name="Sanders M."/>
            <person name="Ma J."/>
            <person name="Kohara Y."/>
            <person name="Sharp S."/>
            <person name="Simmonds M.N."/>
            <person name="Spiegler S."/>
            <person name="Tivey A."/>
            <person name="Sugano S."/>
            <person name="White B."/>
            <person name="Walker D."/>
            <person name="Woodward J.R."/>
            <person name="Winckler T."/>
            <person name="Tanaka Y."/>
            <person name="Shaulsky G."/>
            <person name="Schleicher M."/>
            <person name="Weinstock G.M."/>
            <person name="Rosenthal A."/>
            <person name="Cox E.C."/>
            <person name="Chisholm R.L."/>
            <person name="Gibbs R.A."/>
            <person name="Loomis W.F."/>
            <person name="Platzer M."/>
            <person name="Kay R.R."/>
            <person name="Williams J.G."/>
            <person name="Dear P.H."/>
            <person name="Noegel A.A."/>
            <person name="Barrell B.G."/>
            <person name="Kuspa A."/>
        </authorList>
    </citation>
    <scope>NUCLEOTIDE SEQUENCE [LARGE SCALE GENOMIC DNA]</scope>
    <source>
        <strain>AX4</strain>
    </source>
</reference>
<dbReference type="EC" id="2.3.1.35" evidence="1"/>
<dbReference type="EC" id="2.3.1.1" evidence="1"/>
<dbReference type="EMBL" id="AAFI02000186">
    <property type="protein sequence ID" value="EAL61488.1"/>
    <property type="molecule type" value="Genomic_DNA"/>
</dbReference>
<dbReference type="RefSeq" id="XP_629915.1">
    <property type="nucleotide sequence ID" value="XM_629913.1"/>
</dbReference>
<dbReference type="SMR" id="Q54DY1"/>
<dbReference type="FunCoup" id="Q54DY1">
    <property type="interactions" value="211"/>
</dbReference>
<dbReference type="STRING" id="44689.Q54DY1"/>
<dbReference type="MEROPS" id="T05.001"/>
<dbReference type="PaxDb" id="44689-DDB0231449"/>
<dbReference type="EnsemblProtists" id="EAL61488">
    <property type="protein sequence ID" value="EAL61488"/>
    <property type="gene ID" value="DDB_G0291916"/>
</dbReference>
<dbReference type="GeneID" id="8628416"/>
<dbReference type="KEGG" id="ddi:DDB_G0291916"/>
<dbReference type="dictyBase" id="DDB_G0291916">
    <property type="gene designation" value="argJ"/>
</dbReference>
<dbReference type="VEuPathDB" id="AmoebaDB:DDB_G0291916"/>
<dbReference type="eggNOG" id="KOG2786">
    <property type="taxonomic scope" value="Eukaryota"/>
</dbReference>
<dbReference type="HOGENOM" id="CLU_027172_1_0_1"/>
<dbReference type="InParanoid" id="Q54DY1"/>
<dbReference type="OMA" id="WGRIVMA"/>
<dbReference type="PhylomeDB" id="Q54DY1"/>
<dbReference type="UniPathway" id="UPA00068">
    <property type="reaction ID" value="UER00106"/>
</dbReference>
<dbReference type="UniPathway" id="UPA00068">
    <property type="reaction ID" value="UER00111"/>
</dbReference>
<dbReference type="PRO" id="PR:Q54DY1"/>
<dbReference type="Proteomes" id="UP000002195">
    <property type="component" value="Chromosome 6"/>
</dbReference>
<dbReference type="GO" id="GO:0005759">
    <property type="term" value="C:mitochondrial matrix"/>
    <property type="evidence" value="ECO:0000250"/>
    <property type="project" value="dictyBase"/>
</dbReference>
<dbReference type="GO" id="GO:0004358">
    <property type="term" value="F:glutamate N-acetyltransferase activity"/>
    <property type="evidence" value="ECO:0007669"/>
    <property type="project" value="UniProtKB-UniRule"/>
</dbReference>
<dbReference type="GO" id="GO:0004042">
    <property type="term" value="F:L-glutamate N-acetyltransferase activity"/>
    <property type="evidence" value="ECO:0000250"/>
    <property type="project" value="dictyBase"/>
</dbReference>
<dbReference type="GO" id="GO:0006526">
    <property type="term" value="P:L-arginine biosynthetic process"/>
    <property type="evidence" value="ECO:0007669"/>
    <property type="project" value="UniProtKB-UniRule"/>
</dbReference>
<dbReference type="GO" id="GO:0006592">
    <property type="term" value="P:ornithine biosynthetic process"/>
    <property type="evidence" value="ECO:0000250"/>
    <property type="project" value="dictyBase"/>
</dbReference>
<dbReference type="CDD" id="cd02152">
    <property type="entry name" value="OAT"/>
    <property type="match status" value="1"/>
</dbReference>
<dbReference type="FunFam" id="3.10.20.340:FF:000001">
    <property type="entry name" value="Arginine biosynthesis bifunctional protein ArgJ, chloroplastic"/>
    <property type="match status" value="1"/>
</dbReference>
<dbReference type="FunFam" id="3.60.70.12:FF:000001">
    <property type="entry name" value="Arginine biosynthesis bifunctional protein ArgJ, chloroplastic"/>
    <property type="match status" value="1"/>
</dbReference>
<dbReference type="FunFam" id="3.30.2330.10:FF:000001">
    <property type="entry name" value="Arginine biosynthesis bifunctional protein ArgJ, mitochondrial"/>
    <property type="match status" value="1"/>
</dbReference>
<dbReference type="Gene3D" id="3.30.2330.10">
    <property type="entry name" value="arginine biosynthesis bifunctional protein suprefamily"/>
    <property type="match status" value="1"/>
</dbReference>
<dbReference type="Gene3D" id="3.10.20.340">
    <property type="entry name" value="ArgJ beta chain, C-terminal domain"/>
    <property type="match status" value="1"/>
</dbReference>
<dbReference type="Gene3D" id="3.60.70.12">
    <property type="entry name" value="L-amino peptidase D-ALA esterase/amidase"/>
    <property type="match status" value="1"/>
</dbReference>
<dbReference type="HAMAP" id="MF_01106">
    <property type="entry name" value="ArgJ"/>
    <property type="match status" value="1"/>
</dbReference>
<dbReference type="InterPro" id="IPR002813">
    <property type="entry name" value="Arg_biosynth_ArgJ"/>
</dbReference>
<dbReference type="InterPro" id="IPR016117">
    <property type="entry name" value="ArgJ-like_dom_sf"/>
</dbReference>
<dbReference type="InterPro" id="IPR042195">
    <property type="entry name" value="ArgJ_beta_C"/>
</dbReference>
<dbReference type="NCBIfam" id="TIGR00120">
    <property type="entry name" value="ArgJ"/>
    <property type="match status" value="1"/>
</dbReference>
<dbReference type="NCBIfam" id="NF003802">
    <property type="entry name" value="PRK05388.1"/>
    <property type="match status" value="1"/>
</dbReference>
<dbReference type="PANTHER" id="PTHR23100">
    <property type="entry name" value="ARGININE BIOSYNTHESIS BIFUNCTIONAL PROTEIN ARGJ"/>
    <property type="match status" value="1"/>
</dbReference>
<dbReference type="PANTHER" id="PTHR23100:SF0">
    <property type="entry name" value="ARGININE BIOSYNTHESIS BIFUNCTIONAL PROTEIN ARGJ, MITOCHONDRIAL"/>
    <property type="match status" value="1"/>
</dbReference>
<dbReference type="Pfam" id="PF01960">
    <property type="entry name" value="ArgJ"/>
    <property type="match status" value="1"/>
</dbReference>
<dbReference type="SUPFAM" id="SSF56266">
    <property type="entry name" value="DmpA/ArgJ-like"/>
    <property type="match status" value="1"/>
</dbReference>
<gene>
    <name type="primary">argJ</name>
    <name type="synonym">arg7</name>
    <name type="ORF">DDB_G0291916</name>
</gene>
<feature type="transit peptide" description="Mitochondrion" evidence="1">
    <location>
        <begin position="1"/>
        <end position="23"/>
    </location>
</feature>
<feature type="chain" id="PRO_0000327743" description="Arginine biosynthesis bifunctional protein ArgJ alpha chain" evidence="1">
    <location>
        <begin position="24"/>
        <end position="209"/>
    </location>
</feature>
<feature type="chain" id="PRO_0000327744" description="Arginine biosynthesis bifunctional protein ArgJ beta chain" evidence="1">
    <location>
        <begin position="210"/>
        <end position="442"/>
    </location>
</feature>
<feature type="active site" description="Nucleophile" evidence="1">
    <location>
        <position position="210"/>
    </location>
</feature>
<feature type="binding site" evidence="1">
    <location>
        <position position="173"/>
    </location>
    <ligand>
        <name>substrate</name>
    </ligand>
</feature>
<feature type="binding site" evidence="1">
    <location>
        <position position="199"/>
    </location>
    <ligand>
        <name>substrate</name>
    </ligand>
</feature>
<feature type="binding site" evidence="1">
    <location>
        <position position="210"/>
    </location>
    <ligand>
        <name>substrate</name>
    </ligand>
</feature>
<feature type="binding site" evidence="1">
    <location>
        <position position="297"/>
    </location>
    <ligand>
        <name>substrate</name>
    </ligand>
</feature>
<feature type="binding site" evidence="1">
    <location>
        <position position="437"/>
    </location>
    <ligand>
        <name>substrate</name>
    </ligand>
</feature>
<feature type="binding site" evidence="1">
    <location>
        <position position="442"/>
    </location>
    <ligand>
        <name>substrate</name>
    </ligand>
</feature>
<feature type="site" description="Involved in the stabilization of negative charge on the oxyanion by the formation of the oxyanion hole" evidence="1">
    <location>
        <position position="137"/>
    </location>
</feature>
<feature type="site" description="Involved in the stabilization of negative charge on the oxyanion by the formation of the oxyanion hole" evidence="1">
    <location>
        <position position="138"/>
    </location>
</feature>
<feature type="site" description="Cleavage; by autolysis" evidence="1">
    <location>
        <begin position="209"/>
        <end position="210"/>
    </location>
</feature>
<evidence type="ECO:0000255" key="1">
    <source>
        <dbReference type="HAMAP-Rule" id="MF_03124"/>
    </source>
</evidence>
<sequence length="442" mass="47724">MFSNIVNKKLFQNSTTTSFLRHYSTIKNTTTSPKGFKTGTYACGLKKSGALDICLIHSEKECNVAAVFTENKVKAAPVLLSKSLIEKHKNTGFQSLIINSGGANACTGPEGEKNAQTMSFLSSKLVNAKQQSLVMSTGIIGQQLDMKKVELGITKASENLKDDWLSAAKAIMTTDKVPKLVQKQIEIQGKQVNITGICKGAGMIHPNMATMLCTLCTDADISEEALKSALKHSIDYSFNSINVDGDMSTNDTVAVFSNGLAGNKRIDSTNSKEYLLLEKAMRECATELAQMIVRDAEGATKFISVVVRGAKTEKDGKIIANSIATSSLVKTAMYGEDANWGRVLAAVGYSGADGVVPSNISMWFASGYGDNIGIGQKNDPLIAMQFLKDGQPTPKDDEKAAKLLSNKDISIIVDLNNGNQNYTMWTCDLTVDYVKANSHYRT</sequence>
<name>ARGJ_DICDI</name>
<organism>
    <name type="scientific">Dictyostelium discoideum</name>
    <name type="common">Social amoeba</name>
    <dbReference type="NCBI Taxonomy" id="44689"/>
    <lineage>
        <taxon>Eukaryota</taxon>
        <taxon>Amoebozoa</taxon>
        <taxon>Evosea</taxon>
        <taxon>Eumycetozoa</taxon>
        <taxon>Dictyostelia</taxon>
        <taxon>Dictyosteliales</taxon>
        <taxon>Dictyosteliaceae</taxon>
        <taxon>Dictyostelium</taxon>
    </lineage>
</organism>
<keyword id="KW-0012">Acyltransferase</keyword>
<keyword id="KW-0028">Amino-acid biosynthesis</keyword>
<keyword id="KW-0055">Arginine biosynthesis</keyword>
<keyword id="KW-0068">Autocatalytic cleavage</keyword>
<keyword id="KW-0496">Mitochondrion</keyword>
<keyword id="KW-0511">Multifunctional enzyme</keyword>
<keyword id="KW-1185">Reference proteome</keyword>
<keyword id="KW-0808">Transferase</keyword>
<keyword id="KW-0809">Transit peptide</keyword>
<accession>Q54DY1</accession>
<proteinExistence type="inferred from homology"/>